<evidence type="ECO:0000255" key="1"/>
<evidence type="ECO:0000305" key="2"/>
<evidence type="ECO:0000312" key="3">
    <source>
        <dbReference type="MGI" id="MGI:1913684"/>
    </source>
</evidence>
<dbReference type="EMBL" id="AK019894">
    <property type="status" value="NOT_ANNOTATED_CDS"/>
    <property type="molecule type" value="mRNA"/>
</dbReference>
<dbReference type="EMBL" id="AL831793">
    <property type="status" value="NOT_ANNOTATED_CDS"/>
    <property type="molecule type" value="Genomic_DNA"/>
</dbReference>
<dbReference type="CCDS" id="CCDS89727.1"/>
<dbReference type="RefSeq" id="NP_001336022.1">
    <property type="nucleotide sequence ID" value="NM_001349093.1"/>
</dbReference>
<dbReference type="SMR" id="A0A140LHV9"/>
<dbReference type="STRING" id="10090.ENSMUSP00000146567"/>
<dbReference type="Ensembl" id="ENSMUST00000129758.3">
    <property type="protein sequence ID" value="ENSMUSP00000146567.2"/>
    <property type="gene ID" value="ENSMUSG00000028407.5"/>
</dbReference>
<dbReference type="GeneID" id="100504309"/>
<dbReference type="AGR" id="MGI:1913684"/>
<dbReference type="MGI" id="MGI:1913684">
    <property type="gene designation" value="Smim27"/>
</dbReference>
<dbReference type="VEuPathDB" id="HostDB:ENSMUSG00000028407"/>
<dbReference type="GeneTree" id="ENSGT01020000230598"/>
<dbReference type="InParanoid" id="A0A140LHV9"/>
<dbReference type="ChiTaRS" id="Smim27">
    <property type="organism name" value="mouse"/>
</dbReference>
<dbReference type="PRO" id="PR:A0A140LHV9"/>
<dbReference type="Proteomes" id="UP000000589">
    <property type="component" value="Chromosome 4"/>
</dbReference>
<dbReference type="Bgee" id="ENSMUSG00000028407">
    <property type="expression patterns" value="Expressed in interventricular septum and 175 other cell types or tissues"/>
</dbReference>
<dbReference type="GO" id="GO:0016020">
    <property type="term" value="C:membrane"/>
    <property type="evidence" value="ECO:0007669"/>
    <property type="project" value="UniProtKB-SubCell"/>
</dbReference>
<protein>
    <recommendedName>
        <fullName evidence="2">Small integral membrane protein 27</fullName>
    </recommendedName>
    <alternativeName>
        <fullName evidence="2">TOPORS antisense RNA 1</fullName>
    </alternativeName>
</protein>
<name>SIM27_MOUSE</name>
<keyword id="KW-0472">Membrane</keyword>
<keyword id="KW-1185">Reference proteome</keyword>
<keyword id="KW-0812">Transmembrane</keyword>
<keyword id="KW-1133">Transmembrane helix</keyword>
<comment type="subcellular location">
    <subcellularLocation>
        <location evidence="1">Membrane</location>
        <topology evidence="1">Single-pass membrane protein</topology>
    </subcellularLocation>
</comment>
<gene>
    <name evidence="3" type="primary">Smim27</name>
    <name evidence="3" type="synonym">Toporsos</name>
</gene>
<reference key="1">
    <citation type="journal article" date="2005" name="Science">
        <title>The transcriptional landscape of the mammalian genome.</title>
        <authorList>
            <person name="Carninci P."/>
            <person name="Kasukawa T."/>
            <person name="Katayama S."/>
            <person name="Gough J."/>
            <person name="Frith M.C."/>
            <person name="Maeda N."/>
            <person name="Oyama R."/>
            <person name="Ravasi T."/>
            <person name="Lenhard B."/>
            <person name="Wells C."/>
            <person name="Kodzius R."/>
            <person name="Shimokawa K."/>
            <person name="Bajic V.B."/>
            <person name="Brenner S.E."/>
            <person name="Batalov S."/>
            <person name="Forrest A.R."/>
            <person name="Zavolan M."/>
            <person name="Davis M.J."/>
            <person name="Wilming L.G."/>
            <person name="Aidinis V."/>
            <person name="Allen J.E."/>
            <person name="Ambesi-Impiombato A."/>
            <person name="Apweiler R."/>
            <person name="Aturaliya R.N."/>
            <person name="Bailey T.L."/>
            <person name="Bansal M."/>
            <person name="Baxter L."/>
            <person name="Beisel K.W."/>
            <person name="Bersano T."/>
            <person name="Bono H."/>
            <person name="Chalk A.M."/>
            <person name="Chiu K.P."/>
            <person name="Choudhary V."/>
            <person name="Christoffels A."/>
            <person name="Clutterbuck D.R."/>
            <person name="Crowe M.L."/>
            <person name="Dalla E."/>
            <person name="Dalrymple B.P."/>
            <person name="de Bono B."/>
            <person name="Della Gatta G."/>
            <person name="di Bernardo D."/>
            <person name="Down T."/>
            <person name="Engstrom P."/>
            <person name="Fagiolini M."/>
            <person name="Faulkner G."/>
            <person name="Fletcher C.F."/>
            <person name="Fukushima T."/>
            <person name="Furuno M."/>
            <person name="Futaki S."/>
            <person name="Gariboldi M."/>
            <person name="Georgii-Hemming P."/>
            <person name="Gingeras T.R."/>
            <person name="Gojobori T."/>
            <person name="Green R.E."/>
            <person name="Gustincich S."/>
            <person name="Harbers M."/>
            <person name="Hayashi Y."/>
            <person name="Hensch T.K."/>
            <person name="Hirokawa N."/>
            <person name="Hill D."/>
            <person name="Huminiecki L."/>
            <person name="Iacono M."/>
            <person name="Ikeo K."/>
            <person name="Iwama A."/>
            <person name="Ishikawa T."/>
            <person name="Jakt M."/>
            <person name="Kanapin A."/>
            <person name="Katoh M."/>
            <person name="Kawasawa Y."/>
            <person name="Kelso J."/>
            <person name="Kitamura H."/>
            <person name="Kitano H."/>
            <person name="Kollias G."/>
            <person name="Krishnan S.P."/>
            <person name="Kruger A."/>
            <person name="Kummerfeld S.K."/>
            <person name="Kurochkin I.V."/>
            <person name="Lareau L.F."/>
            <person name="Lazarevic D."/>
            <person name="Lipovich L."/>
            <person name="Liu J."/>
            <person name="Liuni S."/>
            <person name="McWilliam S."/>
            <person name="Madan Babu M."/>
            <person name="Madera M."/>
            <person name="Marchionni L."/>
            <person name="Matsuda H."/>
            <person name="Matsuzawa S."/>
            <person name="Miki H."/>
            <person name="Mignone F."/>
            <person name="Miyake S."/>
            <person name="Morris K."/>
            <person name="Mottagui-Tabar S."/>
            <person name="Mulder N."/>
            <person name="Nakano N."/>
            <person name="Nakauchi H."/>
            <person name="Ng P."/>
            <person name="Nilsson R."/>
            <person name="Nishiguchi S."/>
            <person name="Nishikawa S."/>
            <person name="Nori F."/>
            <person name="Ohara O."/>
            <person name="Okazaki Y."/>
            <person name="Orlando V."/>
            <person name="Pang K.C."/>
            <person name="Pavan W.J."/>
            <person name="Pavesi G."/>
            <person name="Pesole G."/>
            <person name="Petrovsky N."/>
            <person name="Piazza S."/>
            <person name="Reed J."/>
            <person name="Reid J.F."/>
            <person name="Ring B.Z."/>
            <person name="Ringwald M."/>
            <person name="Rost B."/>
            <person name="Ruan Y."/>
            <person name="Salzberg S.L."/>
            <person name="Sandelin A."/>
            <person name="Schneider C."/>
            <person name="Schoenbach C."/>
            <person name="Sekiguchi K."/>
            <person name="Semple C.A."/>
            <person name="Seno S."/>
            <person name="Sessa L."/>
            <person name="Sheng Y."/>
            <person name="Shibata Y."/>
            <person name="Shimada H."/>
            <person name="Shimada K."/>
            <person name="Silva D."/>
            <person name="Sinclair B."/>
            <person name="Sperling S."/>
            <person name="Stupka E."/>
            <person name="Sugiura K."/>
            <person name="Sultana R."/>
            <person name="Takenaka Y."/>
            <person name="Taki K."/>
            <person name="Tammoja K."/>
            <person name="Tan S.L."/>
            <person name="Tang S."/>
            <person name="Taylor M.S."/>
            <person name="Tegner J."/>
            <person name="Teichmann S.A."/>
            <person name="Ueda H.R."/>
            <person name="van Nimwegen E."/>
            <person name="Verardo R."/>
            <person name="Wei C.L."/>
            <person name="Yagi K."/>
            <person name="Yamanishi H."/>
            <person name="Zabarovsky E."/>
            <person name="Zhu S."/>
            <person name="Zimmer A."/>
            <person name="Hide W."/>
            <person name="Bult C."/>
            <person name="Grimmond S.M."/>
            <person name="Teasdale R.D."/>
            <person name="Liu E.T."/>
            <person name="Brusic V."/>
            <person name="Quackenbush J."/>
            <person name="Wahlestedt C."/>
            <person name="Mattick J.S."/>
            <person name="Hume D.A."/>
            <person name="Kai C."/>
            <person name="Sasaki D."/>
            <person name="Tomaru Y."/>
            <person name="Fukuda S."/>
            <person name="Kanamori-Katayama M."/>
            <person name="Suzuki M."/>
            <person name="Aoki J."/>
            <person name="Arakawa T."/>
            <person name="Iida J."/>
            <person name="Imamura K."/>
            <person name="Itoh M."/>
            <person name="Kato T."/>
            <person name="Kawaji H."/>
            <person name="Kawagashira N."/>
            <person name="Kawashima T."/>
            <person name="Kojima M."/>
            <person name="Kondo S."/>
            <person name="Konno H."/>
            <person name="Nakano K."/>
            <person name="Ninomiya N."/>
            <person name="Nishio T."/>
            <person name="Okada M."/>
            <person name="Plessy C."/>
            <person name="Shibata K."/>
            <person name="Shiraki T."/>
            <person name="Suzuki S."/>
            <person name="Tagami M."/>
            <person name="Waki K."/>
            <person name="Watahiki A."/>
            <person name="Okamura-Oho Y."/>
            <person name="Suzuki H."/>
            <person name="Kawai J."/>
            <person name="Hayashizaki Y."/>
        </authorList>
    </citation>
    <scope>NUCLEOTIDE SEQUENCE [LARGE SCALE MRNA]</scope>
</reference>
<reference key="2">
    <citation type="journal article" date="2009" name="PLoS Biol.">
        <title>Lineage-specific biology revealed by a finished genome assembly of the mouse.</title>
        <authorList>
            <person name="Church D.M."/>
            <person name="Goodstadt L."/>
            <person name="Hillier L.W."/>
            <person name="Zody M.C."/>
            <person name="Goldstein S."/>
            <person name="She X."/>
            <person name="Bult C.J."/>
            <person name="Agarwala R."/>
            <person name="Cherry J.L."/>
            <person name="DiCuccio M."/>
            <person name="Hlavina W."/>
            <person name="Kapustin Y."/>
            <person name="Meric P."/>
            <person name="Maglott D."/>
            <person name="Birtle Z."/>
            <person name="Marques A.C."/>
            <person name="Graves T."/>
            <person name="Zhou S."/>
            <person name="Teague B."/>
            <person name="Potamousis K."/>
            <person name="Churas C."/>
            <person name="Place M."/>
            <person name="Herschleb J."/>
            <person name="Runnheim R."/>
            <person name="Forrest D."/>
            <person name="Amos-Landgraf J."/>
            <person name="Schwartz D.C."/>
            <person name="Cheng Z."/>
            <person name="Lindblad-Toh K."/>
            <person name="Eichler E.E."/>
            <person name="Ponting C.P."/>
        </authorList>
    </citation>
    <scope>NUCLEOTIDE SEQUENCE [LARGE SCALE GENOMIC DNA]</scope>
    <source>
        <strain>C57BL/6J</strain>
    </source>
</reference>
<organism>
    <name type="scientific">Mus musculus</name>
    <name type="common">Mouse</name>
    <dbReference type="NCBI Taxonomy" id="10090"/>
    <lineage>
        <taxon>Eukaryota</taxon>
        <taxon>Metazoa</taxon>
        <taxon>Chordata</taxon>
        <taxon>Craniata</taxon>
        <taxon>Vertebrata</taxon>
        <taxon>Euteleostomi</taxon>
        <taxon>Mammalia</taxon>
        <taxon>Eutheria</taxon>
        <taxon>Euarchontoglires</taxon>
        <taxon>Glires</taxon>
        <taxon>Rodentia</taxon>
        <taxon>Myomorpha</taxon>
        <taxon>Muroidea</taxon>
        <taxon>Muridae</taxon>
        <taxon>Murinae</taxon>
        <taxon>Mus</taxon>
        <taxon>Mus</taxon>
    </lineage>
</organism>
<feature type="chain" id="PRO_0000443389" description="Small integral membrane protein 27" evidence="1">
    <location>
        <begin position="1"/>
        <end position="49"/>
    </location>
</feature>
<feature type="transmembrane region" description="Helical" evidence="1">
    <location>
        <begin position="11"/>
        <end position="31"/>
    </location>
</feature>
<accession>A0A140LHV9</accession>
<sequence>MRPMSRRSLDWTYSLLLLAIVLLSWGFVIYASTVAARRQLQKEFPDKFF</sequence>
<proteinExistence type="inferred from homology"/>